<dbReference type="EMBL" id="AE000516">
    <property type="protein sequence ID" value="AAK46407.1"/>
    <property type="molecule type" value="Genomic_DNA"/>
</dbReference>
<dbReference type="PIR" id="F70764">
    <property type="entry name" value="F70764"/>
</dbReference>
<dbReference type="RefSeq" id="WP_003899152.1">
    <property type="nucleotide sequence ID" value="NZ_KK341227.1"/>
</dbReference>
<dbReference type="SMR" id="P9WLL8"/>
<dbReference type="KEGG" id="mtc:MT2127"/>
<dbReference type="HOGENOM" id="CLU_055977_0_0_11"/>
<dbReference type="Proteomes" id="UP000001020">
    <property type="component" value="Chromosome"/>
</dbReference>
<dbReference type="CDD" id="cd02440">
    <property type="entry name" value="AdoMet_MTases"/>
    <property type="match status" value="1"/>
</dbReference>
<dbReference type="FunFam" id="3.40.50.150:FF:000515">
    <property type="entry name" value="Asparaginyl-tRNA synthetase"/>
    <property type="match status" value="1"/>
</dbReference>
<dbReference type="Gene3D" id="3.40.50.150">
    <property type="entry name" value="Vaccinia Virus protein VP39"/>
    <property type="match status" value="1"/>
</dbReference>
<dbReference type="InterPro" id="IPR013217">
    <property type="entry name" value="Methyltransf_12"/>
</dbReference>
<dbReference type="InterPro" id="IPR029063">
    <property type="entry name" value="SAM-dependent_MTases_sf"/>
</dbReference>
<dbReference type="Pfam" id="PF08242">
    <property type="entry name" value="Methyltransf_12"/>
    <property type="match status" value="1"/>
</dbReference>
<dbReference type="SUPFAM" id="SSF53335">
    <property type="entry name" value="S-adenosyl-L-methionine-dependent methyltransferases"/>
    <property type="match status" value="1"/>
</dbReference>
<sequence length="407" mass="45930">MTDDHPRADIVSRQYHRWLYPHPIADLEAWTTANWEWFDPVHSHRILWPDREYRPDLDILIAGCGTNQAAIFAFTNRAAKVVAIDISRPALDHQQYLKDKHGLANLELHLLPIEELATLGRDFDLVVSTGVLHHLADPRAGMKELAHCLRRDGVVAAMLYGKYGRIGVELLGSVFRDLGLGQDDASIKLAKEAISLLPTYHPLRNYLTKARDLLSDSALVDTFLHGRQRSYTVEECVDLVTSAGLVFQGWFHKAPYYPHDFFVPNSEFYAAVNTLPEVKAWSVMERLKTLNATHLFMACRRDRPKEQYTIDFSTVAALDYVPLMRTRCGVSGTDMFWPGWRMAPSPAQLAFLQQVDGRRTIREIAGCVARTGEPSGGSLADLEEFGRKLFQSLWRLDFVAVALPASG</sequence>
<accession>P9WLL8</accession>
<accession>L0TA29</accession>
<accession>P0A5G1</accession>
<accession>Q10678</accession>
<gene>
    <name type="ordered locus">MT2127</name>
</gene>
<name>Y2067_MYCTO</name>
<organism>
    <name type="scientific">Mycobacterium tuberculosis (strain CDC 1551 / Oshkosh)</name>
    <dbReference type="NCBI Taxonomy" id="83331"/>
    <lineage>
        <taxon>Bacteria</taxon>
        <taxon>Bacillati</taxon>
        <taxon>Actinomycetota</taxon>
        <taxon>Actinomycetes</taxon>
        <taxon>Mycobacteriales</taxon>
        <taxon>Mycobacteriaceae</taxon>
        <taxon>Mycobacterium</taxon>
        <taxon>Mycobacterium tuberculosis complex</taxon>
    </lineage>
</organism>
<keyword id="KW-1185">Reference proteome</keyword>
<feature type="chain" id="PRO_0000427456" description="Uncharacterized protein MT2127">
    <location>
        <begin position="1"/>
        <end position="407"/>
    </location>
</feature>
<protein>
    <recommendedName>
        <fullName>Uncharacterized protein MT2127</fullName>
    </recommendedName>
</protein>
<proteinExistence type="predicted"/>
<reference key="1">
    <citation type="journal article" date="2002" name="J. Bacteriol.">
        <title>Whole-genome comparison of Mycobacterium tuberculosis clinical and laboratory strains.</title>
        <authorList>
            <person name="Fleischmann R.D."/>
            <person name="Alland D."/>
            <person name="Eisen J.A."/>
            <person name="Carpenter L."/>
            <person name="White O."/>
            <person name="Peterson J.D."/>
            <person name="DeBoy R.T."/>
            <person name="Dodson R.J."/>
            <person name="Gwinn M.L."/>
            <person name="Haft D.H."/>
            <person name="Hickey E.K."/>
            <person name="Kolonay J.F."/>
            <person name="Nelson W.C."/>
            <person name="Umayam L.A."/>
            <person name="Ermolaeva M.D."/>
            <person name="Salzberg S.L."/>
            <person name="Delcher A."/>
            <person name="Utterback T.R."/>
            <person name="Weidman J.F."/>
            <person name="Khouri H.M."/>
            <person name="Gill J."/>
            <person name="Mikula A."/>
            <person name="Bishai W."/>
            <person name="Jacobs W.R. Jr."/>
            <person name="Venter J.C."/>
            <person name="Fraser C.M."/>
        </authorList>
    </citation>
    <scope>NUCLEOTIDE SEQUENCE [LARGE SCALE GENOMIC DNA]</scope>
    <source>
        <strain>CDC 1551 / Oshkosh</strain>
    </source>
</reference>